<gene>
    <name evidence="1" type="primary">rpsO</name>
    <name type="ordered locus">Cpar_1789</name>
</gene>
<dbReference type="EMBL" id="CP001099">
    <property type="protein sequence ID" value="ACF12181.1"/>
    <property type="molecule type" value="Genomic_DNA"/>
</dbReference>
<dbReference type="RefSeq" id="WP_012503014.1">
    <property type="nucleotide sequence ID" value="NC_011027.1"/>
</dbReference>
<dbReference type="SMR" id="B3QQH8"/>
<dbReference type="STRING" id="517417.Cpar_1789"/>
<dbReference type="KEGG" id="cpc:Cpar_1789"/>
<dbReference type="eggNOG" id="COG0184">
    <property type="taxonomic scope" value="Bacteria"/>
</dbReference>
<dbReference type="HOGENOM" id="CLU_148518_0_0_10"/>
<dbReference type="OrthoDB" id="9799262at2"/>
<dbReference type="Proteomes" id="UP000008811">
    <property type="component" value="Chromosome"/>
</dbReference>
<dbReference type="GO" id="GO:0022627">
    <property type="term" value="C:cytosolic small ribosomal subunit"/>
    <property type="evidence" value="ECO:0007669"/>
    <property type="project" value="TreeGrafter"/>
</dbReference>
<dbReference type="GO" id="GO:0019843">
    <property type="term" value="F:rRNA binding"/>
    <property type="evidence" value="ECO:0007669"/>
    <property type="project" value="UniProtKB-UniRule"/>
</dbReference>
<dbReference type="GO" id="GO:0003735">
    <property type="term" value="F:structural constituent of ribosome"/>
    <property type="evidence" value="ECO:0007669"/>
    <property type="project" value="InterPro"/>
</dbReference>
<dbReference type="GO" id="GO:0006412">
    <property type="term" value="P:translation"/>
    <property type="evidence" value="ECO:0007669"/>
    <property type="project" value="UniProtKB-UniRule"/>
</dbReference>
<dbReference type="CDD" id="cd00353">
    <property type="entry name" value="Ribosomal_S15p_S13e"/>
    <property type="match status" value="1"/>
</dbReference>
<dbReference type="FunFam" id="1.10.287.10:FF:000002">
    <property type="entry name" value="30S ribosomal protein S15"/>
    <property type="match status" value="1"/>
</dbReference>
<dbReference type="Gene3D" id="6.10.250.3130">
    <property type="match status" value="1"/>
</dbReference>
<dbReference type="Gene3D" id="1.10.287.10">
    <property type="entry name" value="S15/NS1, RNA-binding"/>
    <property type="match status" value="1"/>
</dbReference>
<dbReference type="HAMAP" id="MF_01343_B">
    <property type="entry name" value="Ribosomal_uS15_B"/>
    <property type="match status" value="1"/>
</dbReference>
<dbReference type="InterPro" id="IPR000589">
    <property type="entry name" value="Ribosomal_uS15"/>
</dbReference>
<dbReference type="InterPro" id="IPR005290">
    <property type="entry name" value="Ribosomal_uS15_bac-type"/>
</dbReference>
<dbReference type="InterPro" id="IPR009068">
    <property type="entry name" value="uS15_NS1_RNA-bd_sf"/>
</dbReference>
<dbReference type="NCBIfam" id="TIGR00952">
    <property type="entry name" value="S15_bact"/>
    <property type="match status" value="1"/>
</dbReference>
<dbReference type="PANTHER" id="PTHR23321">
    <property type="entry name" value="RIBOSOMAL PROTEIN S15, BACTERIAL AND ORGANELLAR"/>
    <property type="match status" value="1"/>
</dbReference>
<dbReference type="PANTHER" id="PTHR23321:SF26">
    <property type="entry name" value="SMALL RIBOSOMAL SUBUNIT PROTEIN US15M"/>
    <property type="match status" value="1"/>
</dbReference>
<dbReference type="Pfam" id="PF00312">
    <property type="entry name" value="Ribosomal_S15"/>
    <property type="match status" value="1"/>
</dbReference>
<dbReference type="SMART" id="SM01387">
    <property type="entry name" value="Ribosomal_S15"/>
    <property type="match status" value="1"/>
</dbReference>
<dbReference type="SUPFAM" id="SSF47060">
    <property type="entry name" value="S15/NS1 RNA-binding domain"/>
    <property type="match status" value="1"/>
</dbReference>
<dbReference type="PROSITE" id="PS00362">
    <property type="entry name" value="RIBOSOMAL_S15"/>
    <property type="match status" value="1"/>
</dbReference>
<sequence>MGLAKEHKTEIITKFGDSATDTGKAEVQVALFSRRIADLTGHLQQHPKDKHSRRGLLMLVGKRKRVLNYLKKVDIERYRKVLADLDLRK</sequence>
<protein>
    <recommendedName>
        <fullName evidence="1">Small ribosomal subunit protein uS15</fullName>
    </recommendedName>
    <alternativeName>
        <fullName evidence="2">30S ribosomal protein S15</fullName>
    </alternativeName>
</protein>
<keyword id="KW-0687">Ribonucleoprotein</keyword>
<keyword id="KW-0689">Ribosomal protein</keyword>
<keyword id="KW-0694">RNA-binding</keyword>
<keyword id="KW-0699">rRNA-binding</keyword>
<name>RS15_CHLP8</name>
<feature type="chain" id="PRO_1000143091" description="Small ribosomal subunit protein uS15">
    <location>
        <begin position="1"/>
        <end position="89"/>
    </location>
</feature>
<comment type="function">
    <text evidence="1">One of the primary rRNA binding proteins, it binds directly to 16S rRNA where it helps nucleate assembly of the platform of the 30S subunit by binding and bridging several RNA helices of the 16S rRNA.</text>
</comment>
<comment type="function">
    <text evidence="1">Forms an intersubunit bridge (bridge B4) with the 23S rRNA of the 50S subunit in the ribosome.</text>
</comment>
<comment type="subunit">
    <text evidence="1">Part of the 30S ribosomal subunit. Forms a bridge to the 50S subunit in the 70S ribosome, contacting the 23S rRNA.</text>
</comment>
<comment type="similarity">
    <text evidence="1">Belongs to the universal ribosomal protein uS15 family.</text>
</comment>
<organism>
    <name type="scientific">Chlorobaculum parvum (strain DSM 263 / NCIMB 8327)</name>
    <name type="common">Chlorobium vibrioforme subsp. thiosulfatophilum</name>
    <dbReference type="NCBI Taxonomy" id="517417"/>
    <lineage>
        <taxon>Bacteria</taxon>
        <taxon>Pseudomonadati</taxon>
        <taxon>Chlorobiota</taxon>
        <taxon>Chlorobiia</taxon>
        <taxon>Chlorobiales</taxon>
        <taxon>Chlorobiaceae</taxon>
        <taxon>Chlorobaculum</taxon>
    </lineage>
</organism>
<accession>B3QQH8</accession>
<proteinExistence type="inferred from homology"/>
<reference key="1">
    <citation type="submission" date="2008-06" db="EMBL/GenBank/DDBJ databases">
        <title>Complete sequence of Chlorobaculum parvum NCIB 8327.</title>
        <authorList>
            <consortium name="US DOE Joint Genome Institute"/>
            <person name="Lucas S."/>
            <person name="Copeland A."/>
            <person name="Lapidus A."/>
            <person name="Glavina del Rio T."/>
            <person name="Dalin E."/>
            <person name="Tice H."/>
            <person name="Bruce D."/>
            <person name="Goodwin L."/>
            <person name="Pitluck S."/>
            <person name="Schmutz J."/>
            <person name="Larimer F."/>
            <person name="Land M."/>
            <person name="Hauser L."/>
            <person name="Kyrpides N."/>
            <person name="Mikhailova N."/>
            <person name="Zhao F."/>
            <person name="Li T."/>
            <person name="Liu Z."/>
            <person name="Overmann J."/>
            <person name="Bryant D.A."/>
            <person name="Richardson P."/>
        </authorList>
    </citation>
    <scope>NUCLEOTIDE SEQUENCE [LARGE SCALE GENOMIC DNA]</scope>
    <source>
        <strain>DSM 263 / NCIMB 8327</strain>
    </source>
</reference>
<evidence type="ECO:0000255" key="1">
    <source>
        <dbReference type="HAMAP-Rule" id="MF_01343"/>
    </source>
</evidence>
<evidence type="ECO:0000305" key="2"/>